<gene>
    <name type="primary">gcl</name>
    <name type="ordered locus">Z0661</name>
    <name type="ordered locus">ECs0568</name>
</gene>
<dbReference type="EC" id="4.1.1.47"/>
<dbReference type="EMBL" id="AE005174">
    <property type="protein sequence ID" value="AAG54863.1"/>
    <property type="molecule type" value="Genomic_DNA"/>
</dbReference>
<dbReference type="EMBL" id="BA000007">
    <property type="protein sequence ID" value="BAB33991.1"/>
    <property type="molecule type" value="Genomic_DNA"/>
</dbReference>
<dbReference type="PIR" id="C85550">
    <property type="entry name" value="C85550"/>
</dbReference>
<dbReference type="PIR" id="H90699">
    <property type="entry name" value="H90699"/>
</dbReference>
<dbReference type="RefSeq" id="NP_308595.1">
    <property type="nucleotide sequence ID" value="NC_002695.1"/>
</dbReference>
<dbReference type="RefSeq" id="WP_001096881.1">
    <property type="nucleotide sequence ID" value="NZ_VOAI01000030.1"/>
</dbReference>
<dbReference type="SMR" id="P0AEP8"/>
<dbReference type="STRING" id="155864.Z0661"/>
<dbReference type="GeneID" id="75170531"/>
<dbReference type="GeneID" id="915770"/>
<dbReference type="KEGG" id="ece:Z0661"/>
<dbReference type="KEGG" id="ecs:ECs_0568"/>
<dbReference type="PATRIC" id="fig|386585.9.peg.676"/>
<dbReference type="eggNOG" id="COG3960">
    <property type="taxonomic scope" value="Bacteria"/>
</dbReference>
<dbReference type="HOGENOM" id="CLU_013748_1_2_6"/>
<dbReference type="OMA" id="AQMLHVY"/>
<dbReference type="UniPathway" id="UPA00864">
    <property type="reaction ID" value="UER00831"/>
</dbReference>
<dbReference type="Proteomes" id="UP000000558">
    <property type="component" value="Chromosome"/>
</dbReference>
<dbReference type="Proteomes" id="UP000002519">
    <property type="component" value="Chromosome"/>
</dbReference>
<dbReference type="GO" id="GO:0005948">
    <property type="term" value="C:acetolactate synthase complex"/>
    <property type="evidence" value="ECO:0007669"/>
    <property type="project" value="TreeGrafter"/>
</dbReference>
<dbReference type="GO" id="GO:0050660">
    <property type="term" value="F:flavin adenine dinucleotide binding"/>
    <property type="evidence" value="ECO:0007669"/>
    <property type="project" value="TreeGrafter"/>
</dbReference>
<dbReference type="GO" id="GO:0000287">
    <property type="term" value="F:magnesium ion binding"/>
    <property type="evidence" value="ECO:0007669"/>
    <property type="project" value="InterPro"/>
</dbReference>
<dbReference type="GO" id="GO:0009028">
    <property type="term" value="F:tartronate-semialdehyde synthase activity"/>
    <property type="evidence" value="ECO:0007669"/>
    <property type="project" value="UniProtKB-EC"/>
</dbReference>
<dbReference type="GO" id="GO:0030976">
    <property type="term" value="F:thiamine pyrophosphate binding"/>
    <property type="evidence" value="ECO:0007669"/>
    <property type="project" value="InterPro"/>
</dbReference>
<dbReference type="GO" id="GO:0046296">
    <property type="term" value="P:glycolate catabolic process"/>
    <property type="evidence" value="ECO:0007669"/>
    <property type="project" value="UniProtKB-UniPathway"/>
</dbReference>
<dbReference type="GO" id="GO:0009436">
    <property type="term" value="P:glyoxylate catabolic process"/>
    <property type="evidence" value="ECO:0007669"/>
    <property type="project" value="InterPro"/>
</dbReference>
<dbReference type="GO" id="GO:0009097">
    <property type="term" value="P:isoleucine biosynthetic process"/>
    <property type="evidence" value="ECO:0007669"/>
    <property type="project" value="TreeGrafter"/>
</dbReference>
<dbReference type="GO" id="GO:0009099">
    <property type="term" value="P:L-valine biosynthetic process"/>
    <property type="evidence" value="ECO:0007669"/>
    <property type="project" value="TreeGrafter"/>
</dbReference>
<dbReference type="CDD" id="cd02006">
    <property type="entry name" value="TPP_Gcl"/>
    <property type="match status" value="1"/>
</dbReference>
<dbReference type="CDD" id="cd07035">
    <property type="entry name" value="TPP_PYR_POX_like"/>
    <property type="match status" value="1"/>
</dbReference>
<dbReference type="FunFam" id="3.40.50.1220:FF:000008">
    <property type="entry name" value="Acetolactate synthase"/>
    <property type="match status" value="1"/>
</dbReference>
<dbReference type="FunFam" id="3.40.50.970:FF:000007">
    <property type="entry name" value="Acetolactate synthase"/>
    <property type="match status" value="1"/>
</dbReference>
<dbReference type="FunFam" id="3.40.50.970:FF:000026">
    <property type="entry name" value="Glyoxylate carboligase"/>
    <property type="match status" value="1"/>
</dbReference>
<dbReference type="Gene3D" id="3.40.50.970">
    <property type="match status" value="2"/>
</dbReference>
<dbReference type="Gene3D" id="3.40.50.1220">
    <property type="entry name" value="TPP-binding domain"/>
    <property type="match status" value="1"/>
</dbReference>
<dbReference type="InterPro" id="IPR029035">
    <property type="entry name" value="DHS-like_NAD/FAD-binding_dom"/>
</dbReference>
<dbReference type="InterPro" id="IPR047034">
    <property type="entry name" value="Gcl_TPP-bd"/>
</dbReference>
<dbReference type="InterPro" id="IPR006397">
    <property type="entry name" value="Glyox_carbo_lig"/>
</dbReference>
<dbReference type="InterPro" id="IPR029061">
    <property type="entry name" value="THDP-binding"/>
</dbReference>
<dbReference type="InterPro" id="IPR012000">
    <property type="entry name" value="Thiamin_PyroP_enz_cen_dom"/>
</dbReference>
<dbReference type="InterPro" id="IPR012001">
    <property type="entry name" value="Thiamin_PyroP_enz_TPP-bd_dom"/>
</dbReference>
<dbReference type="InterPro" id="IPR045229">
    <property type="entry name" value="TPP_enz"/>
</dbReference>
<dbReference type="InterPro" id="IPR011766">
    <property type="entry name" value="TPP_enzyme_TPP-bd"/>
</dbReference>
<dbReference type="NCBIfam" id="TIGR01504">
    <property type="entry name" value="glyox_carbo_lig"/>
    <property type="match status" value="1"/>
</dbReference>
<dbReference type="NCBIfam" id="NF008431">
    <property type="entry name" value="PRK11269.1"/>
    <property type="match status" value="1"/>
</dbReference>
<dbReference type="PANTHER" id="PTHR18968:SF14">
    <property type="entry name" value="GLYOXYLATE CARBOLIGASE"/>
    <property type="match status" value="1"/>
</dbReference>
<dbReference type="PANTHER" id="PTHR18968">
    <property type="entry name" value="THIAMINE PYROPHOSPHATE ENZYMES"/>
    <property type="match status" value="1"/>
</dbReference>
<dbReference type="Pfam" id="PF02775">
    <property type="entry name" value="TPP_enzyme_C"/>
    <property type="match status" value="1"/>
</dbReference>
<dbReference type="Pfam" id="PF00205">
    <property type="entry name" value="TPP_enzyme_M"/>
    <property type="match status" value="1"/>
</dbReference>
<dbReference type="Pfam" id="PF02776">
    <property type="entry name" value="TPP_enzyme_N"/>
    <property type="match status" value="1"/>
</dbReference>
<dbReference type="SUPFAM" id="SSF52467">
    <property type="entry name" value="DHS-like NAD/FAD-binding domain"/>
    <property type="match status" value="1"/>
</dbReference>
<dbReference type="SUPFAM" id="SSF52518">
    <property type="entry name" value="Thiamin diphosphate-binding fold (THDP-binding)"/>
    <property type="match status" value="2"/>
</dbReference>
<proteinExistence type="inferred from homology"/>
<sequence>MAKMRAVDAAMYVLEKEGITTAFGVPGAAINPFYSAMRKHGGIRHILARHVEGASHMAEGYTRATAGNIGVCLGTSGPAGTDMITALYSASADSIPILCITGQAPRARLHKEDFQAVDIEAIAKPVSKMAVTVREAALVPRVLQQAFHLMRSGRPGPVLVDLPFDVQVAEIEFDPDMYEPLPVYKPAASRMQIEKAVEMLIQAERPVIVAGGGVINADAAALLQQFAELTSVPVIPTLMGWGCIPDDHELMAGMVGLQTAHRYGNATLLASDMVFGIGNRFANRHTGSVEKYTEGRKIVHIDIEPTQIGRVLCPDLGIVSDAKAALTLLVEVAQEMQKAGRLPCRKEWVADCQQRKRTLLRKTHFDNVPVKPQRVYEEMNKAFGRDVCYVTTIGLSQIAAAQMLHVFKDRHWINCGQAGPLGWTIPAALGVCAADPKRNVVAISGDFDFQFLIEELAVGAQFNIPYIHVLVNNAYLGLIRQSQRAFDMDYCVQLAFENINSSEVNGYGVDHVKVAEGLGCKAIRVFKPEDIAPAFEQAKALMAQYRVPVVVEVILERVTNISMGSELDNVMEFEDIADNAADAPTETCFMHYE</sequence>
<keyword id="KW-0456">Lyase</keyword>
<keyword id="KW-0460">Magnesium</keyword>
<keyword id="KW-1185">Reference proteome</keyword>
<keyword id="KW-0786">Thiamine pyrophosphate</keyword>
<evidence type="ECO:0000250" key="1"/>
<evidence type="ECO:0000305" key="2"/>
<feature type="initiator methionine" description="Removed" evidence="1">
    <location>
        <position position="1"/>
    </location>
</feature>
<feature type="chain" id="PRO_0000090833" description="Glyoxylate carboligase">
    <location>
        <begin position="2"/>
        <end position="593"/>
    </location>
</feature>
<comment type="function">
    <text evidence="1">Catalyzes the condensation of two molecules of glyoxylate to give 2-hydroxy-3-oxopropanoate (also termed tartronate semialdehyde).</text>
</comment>
<comment type="catalytic activity">
    <reaction>
        <text>2 glyoxylate + H(+) = 2-hydroxy-3-oxopropanoate + CO2</text>
        <dbReference type="Rhea" id="RHEA:10136"/>
        <dbReference type="ChEBI" id="CHEBI:15378"/>
        <dbReference type="ChEBI" id="CHEBI:16526"/>
        <dbReference type="ChEBI" id="CHEBI:36655"/>
        <dbReference type="ChEBI" id="CHEBI:57978"/>
        <dbReference type="EC" id="4.1.1.47"/>
    </reaction>
</comment>
<comment type="cofactor">
    <cofactor evidence="1">
        <name>Mg(2+)</name>
        <dbReference type="ChEBI" id="CHEBI:18420"/>
    </cofactor>
    <text evidence="1">Binds 1 Mg(2+) ion per subunit.</text>
</comment>
<comment type="cofactor">
    <cofactor evidence="1">
        <name>thiamine diphosphate</name>
        <dbReference type="ChEBI" id="CHEBI:58937"/>
    </cofactor>
    <text evidence="1">Binds 1 thiamine pyrophosphate per subunit.</text>
</comment>
<comment type="pathway">
    <text>Organic acid metabolism; glycolate degradation; 3-phospho-D-glycerate from glycolate: step 2/4.</text>
</comment>
<comment type="subunit">
    <text evidence="1">Homotetramer.</text>
</comment>
<comment type="similarity">
    <text evidence="2">Belongs to the TPP enzyme family.</text>
</comment>
<reference key="1">
    <citation type="journal article" date="2001" name="Nature">
        <title>Genome sequence of enterohaemorrhagic Escherichia coli O157:H7.</title>
        <authorList>
            <person name="Perna N.T."/>
            <person name="Plunkett G. III"/>
            <person name="Burland V."/>
            <person name="Mau B."/>
            <person name="Glasner J.D."/>
            <person name="Rose D.J."/>
            <person name="Mayhew G.F."/>
            <person name="Evans P.S."/>
            <person name="Gregor J."/>
            <person name="Kirkpatrick H.A."/>
            <person name="Posfai G."/>
            <person name="Hackett J."/>
            <person name="Klink S."/>
            <person name="Boutin A."/>
            <person name="Shao Y."/>
            <person name="Miller L."/>
            <person name="Grotbeck E.J."/>
            <person name="Davis N.W."/>
            <person name="Lim A."/>
            <person name="Dimalanta E.T."/>
            <person name="Potamousis K."/>
            <person name="Apodaca J."/>
            <person name="Anantharaman T.S."/>
            <person name="Lin J."/>
            <person name="Yen G."/>
            <person name="Schwartz D.C."/>
            <person name="Welch R.A."/>
            <person name="Blattner F.R."/>
        </authorList>
    </citation>
    <scope>NUCLEOTIDE SEQUENCE [LARGE SCALE GENOMIC DNA]</scope>
    <source>
        <strain>O157:H7 / EDL933 / ATCC 700927 / EHEC</strain>
    </source>
</reference>
<reference key="2">
    <citation type="journal article" date="2001" name="DNA Res.">
        <title>Complete genome sequence of enterohemorrhagic Escherichia coli O157:H7 and genomic comparison with a laboratory strain K-12.</title>
        <authorList>
            <person name="Hayashi T."/>
            <person name="Makino K."/>
            <person name="Ohnishi M."/>
            <person name="Kurokawa K."/>
            <person name="Ishii K."/>
            <person name="Yokoyama K."/>
            <person name="Han C.-G."/>
            <person name="Ohtsubo E."/>
            <person name="Nakayama K."/>
            <person name="Murata T."/>
            <person name="Tanaka M."/>
            <person name="Tobe T."/>
            <person name="Iida T."/>
            <person name="Takami H."/>
            <person name="Honda T."/>
            <person name="Sasakawa C."/>
            <person name="Ogasawara N."/>
            <person name="Yasunaga T."/>
            <person name="Kuhara S."/>
            <person name="Shiba T."/>
            <person name="Hattori M."/>
            <person name="Shinagawa H."/>
        </authorList>
    </citation>
    <scope>NUCLEOTIDE SEQUENCE [LARGE SCALE GENOMIC DNA]</scope>
    <source>
        <strain>O157:H7 / Sakai / RIMD 0509952 / EHEC</strain>
    </source>
</reference>
<accession>P0AEP8</accession>
<accession>P30146</accession>
<accession>P77126</accession>
<name>GCL_ECO57</name>
<protein>
    <recommendedName>
        <fullName>Glyoxylate carboligase</fullName>
        <ecNumber>4.1.1.47</ecNumber>
    </recommendedName>
    <alternativeName>
        <fullName>Tartronate-semialdehyde synthase</fullName>
    </alternativeName>
</protein>
<organism>
    <name type="scientific">Escherichia coli O157:H7</name>
    <dbReference type="NCBI Taxonomy" id="83334"/>
    <lineage>
        <taxon>Bacteria</taxon>
        <taxon>Pseudomonadati</taxon>
        <taxon>Pseudomonadota</taxon>
        <taxon>Gammaproteobacteria</taxon>
        <taxon>Enterobacterales</taxon>
        <taxon>Enterobacteriaceae</taxon>
        <taxon>Escherichia</taxon>
    </lineage>
</organism>